<gene>
    <name type="primary">AP1</name>
</gene>
<protein>
    <recommendedName>
        <fullName>Floral homeotic protein APETALA 1</fullName>
        <shortName>BoAP1</shortName>
    </recommendedName>
    <alternativeName>
        <fullName>Agamous-like MADS-box protein AP1</fullName>
    </alternativeName>
</protein>
<comment type="function">
    <text evidence="1">Transcription factor that promotes early floral meristem identity in synergy with LEAFY. Displays a redundant function with CAULIFLOWER in the up-regulation of LEAFY. Required subsequently for the transition of an inflorescence meristem into a floral meristem, and for the normal development of sepals and petals in flowers. Regulates positively B class homeotic proteins (By similarity).</text>
</comment>
<comment type="subunit">
    <text evidence="1">Homodimer capable of binding to CArG-box sequences.</text>
</comment>
<comment type="subcellular location">
    <subcellularLocation>
        <location evidence="2">Nucleus</location>
    </subcellularLocation>
</comment>
<accession>Q39371</accession>
<name>3AP1_BRAOL</name>
<evidence type="ECO:0000250" key="1"/>
<evidence type="ECO:0000255" key="2">
    <source>
        <dbReference type="PROSITE-ProRule" id="PRU00251"/>
    </source>
</evidence>
<evidence type="ECO:0000255" key="3">
    <source>
        <dbReference type="PROSITE-ProRule" id="PRU00629"/>
    </source>
</evidence>
<evidence type="ECO:0000256" key="4">
    <source>
        <dbReference type="SAM" id="MobiDB-lite"/>
    </source>
</evidence>
<keyword id="KW-0010">Activator</keyword>
<keyword id="KW-0175">Coiled coil</keyword>
<keyword id="KW-0217">Developmental protein</keyword>
<keyword id="KW-0221">Differentiation</keyword>
<keyword id="KW-0238">DNA-binding</keyword>
<keyword id="KW-0287">Flowering</keyword>
<keyword id="KW-0539">Nucleus</keyword>
<keyword id="KW-0804">Transcription</keyword>
<keyword id="KW-0805">Transcription regulation</keyword>
<proteinExistence type="evidence at transcript level"/>
<sequence length="256" mass="30207">MGRGRVQLKRIENKINRQVTFSKRRAGLFKKAHEISVLCDAEVALVVFSHKGKLFEYSTDPCMEKILERYERYSYAERQLIAPESDVNTNWSMEYNRLKAKIELLERNQRHYLGEDLQAMSPKELQNLEQQLDTALKHIRSRKNQLMYESINELQRKEKAIQEQNSMLSKQIKERENVLRAQQEQWDEQNHGHNMPPPPPPQQHQIQHPYMLSHQPSPFLNMGGLYQEEDQMAMRRNDLDLSLEPVYNCNLGSFAA</sequence>
<feature type="chain" id="PRO_0000417130" description="Floral homeotic protein APETALA 1">
    <location>
        <begin position="1"/>
        <end position="256"/>
    </location>
</feature>
<feature type="domain" description="MADS-box" evidence="2">
    <location>
        <begin position="1"/>
        <end position="61"/>
    </location>
</feature>
<feature type="domain" description="K-box" evidence="3">
    <location>
        <begin position="88"/>
        <end position="178"/>
    </location>
</feature>
<feature type="region of interest" description="Disordered" evidence="4">
    <location>
        <begin position="187"/>
        <end position="206"/>
    </location>
</feature>
<dbReference type="EMBL" id="Z37968">
    <property type="protein sequence ID" value="CAA86024.1"/>
    <property type="molecule type" value="mRNA"/>
</dbReference>
<dbReference type="SMR" id="Q39371"/>
<dbReference type="GO" id="GO:0005634">
    <property type="term" value="C:nucleus"/>
    <property type="evidence" value="ECO:0007669"/>
    <property type="project" value="UniProtKB-SubCell"/>
</dbReference>
<dbReference type="GO" id="GO:0003700">
    <property type="term" value="F:DNA-binding transcription factor activity"/>
    <property type="evidence" value="ECO:0007669"/>
    <property type="project" value="InterPro"/>
</dbReference>
<dbReference type="GO" id="GO:0046983">
    <property type="term" value="F:protein dimerization activity"/>
    <property type="evidence" value="ECO:0007669"/>
    <property type="project" value="InterPro"/>
</dbReference>
<dbReference type="GO" id="GO:0000977">
    <property type="term" value="F:RNA polymerase II transcription regulatory region sequence-specific DNA binding"/>
    <property type="evidence" value="ECO:0007669"/>
    <property type="project" value="InterPro"/>
</dbReference>
<dbReference type="GO" id="GO:0030154">
    <property type="term" value="P:cell differentiation"/>
    <property type="evidence" value="ECO:0007669"/>
    <property type="project" value="UniProtKB-KW"/>
</dbReference>
<dbReference type="GO" id="GO:0009908">
    <property type="term" value="P:flower development"/>
    <property type="evidence" value="ECO:0007669"/>
    <property type="project" value="UniProtKB-KW"/>
</dbReference>
<dbReference type="GO" id="GO:0045944">
    <property type="term" value="P:positive regulation of transcription by RNA polymerase II"/>
    <property type="evidence" value="ECO:0007669"/>
    <property type="project" value="InterPro"/>
</dbReference>
<dbReference type="CDD" id="cd00265">
    <property type="entry name" value="MADS_MEF2_like"/>
    <property type="match status" value="1"/>
</dbReference>
<dbReference type="FunFam" id="3.40.1810.10:FF:000003">
    <property type="entry name" value="MADS-box transcription factor MADS-MC"/>
    <property type="match status" value="1"/>
</dbReference>
<dbReference type="Gene3D" id="3.40.1810.10">
    <property type="entry name" value="Transcription factor, MADS-box"/>
    <property type="match status" value="1"/>
</dbReference>
<dbReference type="InterPro" id="IPR050142">
    <property type="entry name" value="MADS-box/MEF2_TF"/>
</dbReference>
<dbReference type="InterPro" id="IPR033896">
    <property type="entry name" value="MEF2-like_N"/>
</dbReference>
<dbReference type="InterPro" id="IPR002487">
    <property type="entry name" value="TF_Kbox"/>
</dbReference>
<dbReference type="InterPro" id="IPR002100">
    <property type="entry name" value="TF_MADSbox"/>
</dbReference>
<dbReference type="InterPro" id="IPR036879">
    <property type="entry name" value="TF_MADSbox_sf"/>
</dbReference>
<dbReference type="PANTHER" id="PTHR48019">
    <property type="entry name" value="SERUM RESPONSE FACTOR HOMOLOG"/>
    <property type="match status" value="1"/>
</dbReference>
<dbReference type="Pfam" id="PF01486">
    <property type="entry name" value="K-box"/>
    <property type="match status" value="1"/>
</dbReference>
<dbReference type="Pfam" id="PF00319">
    <property type="entry name" value="SRF-TF"/>
    <property type="match status" value="1"/>
</dbReference>
<dbReference type="PRINTS" id="PR00404">
    <property type="entry name" value="MADSDOMAIN"/>
</dbReference>
<dbReference type="SMART" id="SM00432">
    <property type="entry name" value="MADS"/>
    <property type="match status" value="1"/>
</dbReference>
<dbReference type="SUPFAM" id="SSF55455">
    <property type="entry name" value="SRF-like"/>
    <property type="match status" value="1"/>
</dbReference>
<dbReference type="PROSITE" id="PS51297">
    <property type="entry name" value="K_BOX"/>
    <property type="match status" value="1"/>
</dbReference>
<dbReference type="PROSITE" id="PS00350">
    <property type="entry name" value="MADS_BOX_1"/>
    <property type="match status" value="1"/>
</dbReference>
<dbReference type="PROSITE" id="PS50066">
    <property type="entry name" value="MADS_BOX_2"/>
    <property type="match status" value="1"/>
</dbReference>
<reference key="1">
    <citation type="journal article" date="1995" name="Plant Physiol.">
        <title>The cDNA sequence of a cauliflower apetala-1/squamosa homolog.</title>
        <authorList>
            <person name="Anthony R.G."/>
            <person name="James P.E."/>
            <person name="Jordan B.R."/>
        </authorList>
    </citation>
    <scope>NUCLEOTIDE SEQUENCE [MRNA]</scope>
    <source>
        <tissue>Flower bud</tissue>
    </source>
</reference>
<organism>
    <name type="scientific">Brassica oleracea</name>
    <name type="common">Wild cabbage</name>
    <dbReference type="NCBI Taxonomy" id="3712"/>
    <lineage>
        <taxon>Eukaryota</taxon>
        <taxon>Viridiplantae</taxon>
        <taxon>Streptophyta</taxon>
        <taxon>Embryophyta</taxon>
        <taxon>Tracheophyta</taxon>
        <taxon>Spermatophyta</taxon>
        <taxon>Magnoliopsida</taxon>
        <taxon>eudicotyledons</taxon>
        <taxon>Gunneridae</taxon>
        <taxon>Pentapetalae</taxon>
        <taxon>rosids</taxon>
        <taxon>malvids</taxon>
        <taxon>Brassicales</taxon>
        <taxon>Brassicaceae</taxon>
        <taxon>Brassiceae</taxon>
        <taxon>Brassica</taxon>
    </lineage>
</organism>